<dbReference type="EC" id="6.1.1.16" evidence="1"/>
<dbReference type="EMBL" id="CP000316">
    <property type="protein sequence ID" value="ABE44780.1"/>
    <property type="molecule type" value="Genomic_DNA"/>
</dbReference>
<dbReference type="RefSeq" id="WP_011483778.1">
    <property type="nucleotide sequence ID" value="NC_007948.1"/>
</dbReference>
<dbReference type="SMR" id="Q129L2"/>
<dbReference type="STRING" id="296591.Bpro_2865"/>
<dbReference type="KEGG" id="pol:Bpro_2865"/>
<dbReference type="eggNOG" id="COG0215">
    <property type="taxonomic scope" value="Bacteria"/>
</dbReference>
<dbReference type="HOGENOM" id="CLU_013528_0_1_4"/>
<dbReference type="OrthoDB" id="9815130at2"/>
<dbReference type="Proteomes" id="UP000001983">
    <property type="component" value="Chromosome"/>
</dbReference>
<dbReference type="GO" id="GO:0005829">
    <property type="term" value="C:cytosol"/>
    <property type="evidence" value="ECO:0007669"/>
    <property type="project" value="TreeGrafter"/>
</dbReference>
<dbReference type="GO" id="GO:0005524">
    <property type="term" value="F:ATP binding"/>
    <property type="evidence" value="ECO:0007669"/>
    <property type="project" value="UniProtKB-UniRule"/>
</dbReference>
<dbReference type="GO" id="GO:0004817">
    <property type="term" value="F:cysteine-tRNA ligase activity"/>
    <property type="evidence" value="ECO:0007669"/>
    <property type="project" value="UniProtKB-UniRule"/>
</dbReference>
<dbReference type="GO" id="GO:0008270">
    <property type="term" value="F:zinc ion binding"/>
    <property type="evidence" value="ECO:0007669"/>
    <property type="project" value="UniProtKB-UniRule"/>
</dbReference>
<dbReference type="GO" id="GO:0006423">
    <property type="term" value="P:cysteinyl-tRNA aminoacylation"/>
    <property type="evidence" value="ECO:0007669"/>
    <property type="project" value="UniProtKB-UniRule"/>
</dbReference>
<dbReference type="CDD" id="cd07963">
    <property type="entry name" value="Anticodon_Ia_Cys"/>
    <property type="match status" value="1"/>
</dbReference>
<dbReference type="CDD" id="cd00672">
    <property type="entry name" value="CysRS_core"/>
    <property type="match status" value="1"/>
</dbReference>
<dbReference type="FunFam" id="3.40.50.620:FF:000009">
    <property type="entry name" value="Cysteine--tRNA ligase"/>
    <property type="match status" value="1"/>
</dbReference>
<dbReference type="Gene3D" id="1.20.120.1910">
    <property type="entry name" value="Cysteine-tRNA ligase, C-terminal anti-codon recognition domain"/>
    <property type="match status" value="1"/>
</dbReference>
<dbReference type="Gene3D" id="3.40.50.620">
    <property type="entry name" value="HUPs"/>
    <property type="match status" value="1"/>
</dbReference>
<dbReference type="HAMAP" id="MF_00041">
    <property type="entry name" value="Cys_tRNA_synth"/>
    <property type="match status" value="1"/>
</dbReference>
<dbReference type="InterPro" id="IPR015803">
    <property type="entry name" value="Cys-tRNA-ligase"/>
</dbReference>
<dbReference type="InterPro" id="IPR015273">
    <property type="entry name" value="Cys-tRNA-synt_Ia_DALR"/>
</dbReference>
<dbReference type="InterPro" id="IPR024909">
    <property type="entry name" value="Cys-tRNA/MSH_ligase"/>
</dbReference>
<dbReference type="InterPro" id="IPR056411">
    <property type="entry name" value="CysS_C"/>
</dbReference>
<dbReference type="InterPro" id="IPR014729">
    <property type="entry name" value="Rossmann-like_a/b/a_fold"/>
</dbReference>
<dbReference type="InterPro" id="IPR032678">
    <property type="entry name" value="tRNA-synt_1_cat_dom"/>
</dbReference>
<dbReference type="InterPro" id="IPR009080">
    <property type="entry name" value="tRNAsynth_Ia_anticodon-bd"/>
</dbReference>
<dbReference type="NCBIfam" id="TIGR00435">
    <property type="entry name" value="cysS"/>
    <property type="match status" value="1"/>
</dbReference>
<dbReference type="PANTHER" id="PTHR10890:SF3">
    <property type="entry name" value="CYSTEINE--TRNA LIGASE, CYTOPLASMIC"/>
    <property type="match status" value="1"/>
</dbReference>
<dbReference type="PANTHER" id="PTHR10890">
    <property type="entry name" value="CYSTEINYL-TRNA SYNTHETASE"/>
    <property type="match status" value="1"/>
</dbReference>
<dbReference type="Pfam" id="PF23493">
    <property type="entry name" value="CysS_C"/>
    <property type="match status" value="1"/>
</dbReference>
<dbReference type="Pfam" id="PF09190">
    <property type="entry name" value="DALR_2"/>
    <property type="match status" value="1"/>
</dbReference>
<dbReference type="Pfam" id="PF01406">
    <property type="entry name" value="tRNA-synt_1e"/>
    <property type="match status" value="1"/>
</dbReference>
<dbReference type="PRINTS" id="PR00983">
    <property type="entry name" value="TRNASYNTHCYS"/>
</dbReference>
<dbReference type="SMART" id="SM00840">
    <property type="entry name" value="DALR_2"/>
    <property type="match status" value="1"/>
</dbReference>
<dbReference type="SUPFAM" id="SSF47323">
    <property type="entry name" value="Anticodon-binding domain of a subclass of class I aminoacyl-tRNA synthetases"/>
    <property type="match status" value="1"/>
</dbReference>
<dbReference type="SUPFAM" id="SSF52374">
    <property type="entry name" value="Nucleotidylyl transferase"/>
    <property type="match status" value="1"/>
</dbReference>
<keyword id="KW-0030">Aminoacyl-tRNA synthetase</keyword>
<keyword id="KW-0067">ATP-binding</keyword>
<keyword id="KW-0963">Cytoplasm</keyword>
<keyword id="KW-0436">Ligase</keyword>
<keyword id="KW-0479">Metal-binding</keyword>
<keyword id="KW-0547">Nucleotide-binding</keyword>
<keyword id="KW-0648">Protein biosynthesis</keyword>
<keyword id="KW-1185">Reference proteome</keyword>
<keyword id="KW-0862">Zinc</keyword>
<sequence length="462" mass="50834">MSLRIYNTLSRDVEVFSPLLPGHVRMYVCGMTVYDLCHLGHARAMVAFDVVQRWLKVSGLKVTYVRNVTDIDDKIIKRAVENGETIRSLTDRMVVALHQDADALGIERPTHEPRATDFVPQMLSLIGTLEKKGLAYQTQSGSGQGDVNYAVRKFDGYGKLSGKSLDELRAGERVEVLDGKDDPLDFVLWKSAKPSEPDDAKWDSPYGPGRPGWHIECSAMACELLGESFDIHGGGADLQFPHHENEIAQSEGAFGKPLAGTWMHNGFVRVDNEKMSKSLGNFFTIREILAKYDAETVRFFIIRAHYRSPLNYSDAHLDDARNSLKRLYTALDLVSPAVVAIDWTNPFAARFKAAMDEDFGTPEAVAVLFDLAGEVNKTRSAELAGLLKSLGGCLGLLQSAPGSYLQAGAGLDDASIQRLIAQRADAKKTKNFAEADRIRNDLLGQGIVLKDSPAGTTWEVQS</sequence>
<proteinExistence type="inferred from homology"/>
<evidence type="ECO:0000255" key="1">
    <source>
        <dbReference type="HAMAP-Rule" id="MF_00041"/>
    </source>
</evidence>
<comment type="catalytic activity">
    <reaction evidence="1">
        <text>tRNA(Cys) + L-cysteine + ATP = L-cysteinyl-tRNA(Cys) + AMP + diphosphate</text>
        <dbReference type="Rhea" id="RHEA:17773"/>
        <dbReference type="Rhea" id="RHEA-COMP:9661"/>
        <dbReference type="Rhea" id="RHEA-COMP:9679"/>
        <dbReference type="ChEBI" id="CHEBI:30616"/>
        <dbReference type="ChEBI" id="CHEBI:33019"/>
        <dbReference type="ChEBI" id="CHEBI:35235"/>
        <dbReference type="ChEBI" id="CHEBI:78442"/>
        <dbReference type="ChEBI" id="CHEBI:78517"/>
        <dbReference type="ChEBI" id="CHEBI:456215"/>
        <dbReference type="EC" id="6.1.1.16"/>
    </reaction>
</comment>
<comment type="cofactor">
    <cofactor evidence="1">
        <name>Zn(2+)</name>
        <dbReference type="ChEBI" id="CHEBI:29105"/>
    </cofactor>
    <text evidence="1">Binds 1 zinc ion per subunit.</text>
</comment>
<comment type="subunit">
    <text evidence="1">Monomer.</text>
</comment>
<comment type="subcellular location">
    <subcellularLocation>
        <location evidence="1">Cytoplasm</location>
    </subcellularLocation>
</comment>
<comment type="similarity">
    <text evidence="1">Belongs to the class-I aminoacyl-tRNA synthetase family.</text>
</comment>
<protein>
    <recommendedName>
        <fullName evidence="1">Cysteine--tRNA ligase</fullName>
        <ecNumber evidence="1">6.1.1.16</ecNumber>
    </recommendedName>
    <alternativeName>
        <fullName evidence="1">Cysteinyl-tRNA synthetase</fullName>
        <shortName evidence="1">CysRS</shortName>
    </alternativeName>
</protein>
<accession>Q129L2</accession>
<name>SYC_POLSJ</name>
<organism>
    <name type="scientific">Polaromonas sp. (strain JS666 / ATCC BAA-500)</name>
    <dbReference type="NCBI Taxonomy" id="296591"/>
    <lineage>
        <taxon>Bacteria</taxon>
        <taxon>Pseudomonadati</taxon>
        <taxon>Pseudomonadota</taxon>
        <taxon>Betaproteobacteria</taxon>
        <taxon>Burkholderiales</taxon>
        <taxon>Comamonadaceae</taxon>
        <taxon>Polaromonas</taxon>
    </lineage>
</organism>
<feature type="chain" id="PRO_0000332869" description="Cysteine--tRNA ligase">
    <location>
        <begin position="1"/>
        <end position="462"/>
    </location>
</feature>
<feature type="short sequence motif" description="'HIGH' region">
    <location>
        <begin position="31"/>
        <end position="41"/>
    </location>
</feature>
<feature type="short sequence motif" description="'KMSKS' region">
    <location>
        <begin position="274"/>
        <end position="278"/>
    </location>
</feature>
<feature type="binding site" evidence="1">
    <location>
        <position position="29"/>
    </location>
    <ligand>
        <name>Zn(2+)</name>
        <dbReference type="ChEBI" id="CHEBI:29105"/>
    </ligand>
</feature>
<feature type="binding site" evidence="1">
    <location>
        <position position="217"/>
    </location>
    <ligand>
        <name>Zn(2+)</name>
        <dbReference type="ChEBI" id="CHEBI:29105"/>
    </ligand>
</feature>
<feature type="binding site" evidence="1">
    <location>
        <position position="242"/>
    </location>
    <ligand>
        <name>Zn(2+)</name>
        <dbReference type="ChEBI" id="CHEBI:29105"/>
    </ligand>
</feature>
<feature type="binding site" evidence="1">
    <location>
        <position position="246"/>
    </location>
    <ligand>
        <name>Zn(2+)</name>
        <dbReference type="ChEBI" id="CHEBI:29105"/>
    </ligand>
</feature>
<feature type="binding site" evidence="1">
    <location>
        <position position="277"/>
    </location>
    <ligand>
        <name>ATP</name>
        <dbReference type="ChEBI" id="CHEBI:30616"/>
    </ligand>
</feature>
<gene>
    <name evidence="1" type="primary">cysS</name>
    <name type="ordered locus">Bpro_2865</name>
</gene>
<reference key="1">
    <citation type="journal article" date="2008" name="Appl. Environ. Microbiol.">
        <title>The genome of Polaromonas sp. strain JS666: insights into the evolution of a hydrocarbon- and xenobiotic-degrading bacterium, and features of relevance to biotechnology.</title>
        <authorList>
            <person name="Mattes T.E."/>
            <person name="Alexander A.K."/>
            <person name="Richardson P.M."/>
            <person name="Munk A.C."/>
            <person name="Han C.S."/>
            <person name="Stothard P."/>
            <person name="Coleman N.V."/>
        </authorList>
    </citation>
    <scope>NUCLEOTIDE SEQUENCE [LARGE SCALE GENOMIC DNA]</scope>
    <source>
        <strain>JS666 / ATCC BAA-500</strain>
    </source>
</reference>